<feature type="chain" id="PRO_0000144272" description="V-type ATP synthase subunit D">
    <location>
        <begin position="1"/>
        <end position="223"/>
    </location>
</feature>
<feature type="region of interest" description="Disordered" evidence="1">
    <location>
        <begin position="203"/>
        <end position="223"/>
    </location>
</feature>
<feature type="helix" evidence="3">
    <location>
        <begin position="8"/>
        <end position="70"/>
    </location>
</feature>
<feature type="helix" evidence="3">
    <location>
        <begin position="73"/>
        <end position="82"/>
    </location>
</feature>
<feature type="strand" evidence="3">
    <location>
        <begin position="90"/>
        <end position="96"/>
    </location>
</feature>
<feature type="strand" evidence="3">
    <location>
        <begin position="99"/>
        <end position="105"/>
    </location>
</feature>
<feature type="strand" evidence="3">
    <location>
        <begin position="119"/>
        <end position="122"/>
    </location>
</feature>
<feature type="helix" evidence="3">
    <location>
        <begin position="123"/>
        <end position="168"/>
    </location>
</feature>
<feature type="helix" evidence="3">
    <location>
        <begin position="170"/>
        <end position="208"/>
    </location>
</feature>
<keyword id="KW-0002">3D-structure</keyword>
<keyword id="KW-0066">ATP synthesis</keyword>
<keyword id="KW-0375">Hydrogen ion transport</keyword>
<keyword id="KW-0406">Ion transport</keyword>
<keyword id="KW-1185">Reference proteome</keyword>
<keyword id="KW-0813">Transport</keyword>
<proteinExistence type="evidence at protein level"/>
<gene>
    <name type="primary">atpD</name>
    <name type="synonym">vatD</name>
    <name type="ordered locus">TTHA1271</name>
</gene>
<organism>
    <name type="scientific">Thermus thermophilus (strain ATCC 27634 / DSM 579 / HB8)</name>
    <dbReference type="NCBI Taxonomy" id="300852"/>
    <lineage>
        <taxon>Bacteria</taxon>
        <taxon>Thermotogati</taxon>
        <taxon>Deinococcota</taxon>
        <taxon>Deinococci</taxon>
        <taxon>Thermales</taxon>
        <taxon>Thermaceae</taxon>
        <taxon>Thermus</taxon>
    </lineage>
</organism>
<sequence length="223" mass="24678">MSQVSPTRMNLLQRRGQLRLAQKGVDLLKKKRDALVAEFFGLVREAMEARKALDQAAKEAYAALLLAQAFDGPEVVAGAALGVPPLEGVEAEVENVWGSKVPRLKATFPDGALLSPVGTPAYTLEASRAFRRYAEALIRVANTETRLKKIGEEIKKTTRRVNALEQVVIPGIRAQIRFIQQVLEQREREDTFRLKRIKGKIEAREAEEEGGRPNPQVEIGAGL</sequence>
<comment type="function">
    <text>Produces ATP from ADP in the presence of a proton gradient across the membrane.</text>
</comment>
<comment type="similarity">
    <text evidence="2">Belongs to the V-ATPase D subunit family.</text>
</comment>
<reference key="1">
    <citation type="journal article" date="2000" name="J. Biol. Chem.">
        <title>V-type H+-ATPase/synthase from a thermophilic eubacterium, Thermus thermophilus. Subunit structure and operon.</title>
        <authorList>
            <person name="Yokoyama K."/>
            <person name="Ohkuma S."/>
            <person name="Taguchi H."/>
            <person name="Yasunaga T."/>
            <person name="Wakabayashi T."/>
            <person name="Yoshida M."/>
        </authorList>
    </citation>
    <scope>NUCLEOTIDE SEQUENCE [GENOMIC DNA]</scope>
</reference>
<reference key="2">
    <citation type="submission" date="2004-11" db="EMBL/GenBank/DDBJ databases">
        <title>Complete genome sequence of Thermus thermophilus HB8.</title>
        <authorList>
            <person name="Masui R."/>
            <person name="Kurokawa K."/>
            <person name="Nakagawa N."/>
            <person name="Tokunaga F."/>
            <person name="Koyama Y."/>
            <person name="Shibata T."/>
            <person name="Oshima T."/>
            <person name="Yokoyama S."/>
            <person name="Yasunaga T."/>
            <person name="Kuramitsu S."/>
        </authorList>
    </citation>
    <scope>NUCLEOTIDE SEQUENCE [LARGE SCALE GENOMIC DNA]</scope>
    <source>
        <strain>ATCC 27634 / DSM 579 / HB8</strain>
    </source>
</reference>
<protein>
    <recommendedName>
        <fullName>V-type ATP synthase subunit D</fullName>
    </recommendedName>
    <alternativeName>
        <fullName>V-ATPase subunit D</fullName>
    </alternativeName>
</protein>
<accession>O87880</accession>
<accession>Q5SIU3</accession>
<evidence type="ECO:0000256" key="1">
    <source>
        <dbReference type="SAM" id="MobiDB-lite"/>
    </source>
</evidence>
<evidence type="ECO:0000305" key="2"/>
<evidence type="ECO:0007829" key="3">
    <source>
        <dbReference type="PDB" id="6QUM"/>
    </source>
</evidence>
<name>VATD_THET8</name>
<dbReference type="EMBL" id="D63799">
    <property type="protein sequence ID" value="BAA33198.2"/>
    <property type="molecule type" value="Genomic_DNA"/>
</dbReference>
<dbReference type="EMBL" id="AP008226">
    <property type="protein sequence ID" value="BAD71094.1"/>
    <property type="molecule type" value="Genomic_DNA"/>
</dbReference>
<dbReference type="RefSeq" id="WP_011173332.1">
    <property type="nucleotide sequence ID" value="NC_006461.1"/>
</dbReference>
<dbReference type="RefSeq" id="YP_144537.1">
    <property type="nucleotide sequence ID" value="NC_006461.1"/>
</dbReference>
<dbReference type="PDB" id="3A5C">
    <property type="method" value="X-ray"/>
    <property type="resolution" value="4.51 A"/>
    <property type="chains" value="G/O=1-223"/>
</dbReference>
<dbReference type="PDB" id="3A5D">
    <property type="method" value="X-ray"/>
    <property type="resolution" value="4.80 A"/>
    <property type="chains" value="G/O=1-223"/>
</dbReference>
<dbReference type="PDB" id="3J0J">
    <property type="method" value="EM"/>
    <property type="resolution" value="9.70 A"/>
    <property type="chains" value="G=1-223"/>
</dbReference>
<dbReference type="PDB" id="3W3A">
    <property type="method" value="X-ray"/>
    <property type="resolution" value="3.90 A"/>
    <property type="chains" value="G/O=2-211"/>
</dbReference>
<dbReference type="PDB" id="5GAR">
    <property type="method" value="EM"/>
    <property type="resolution" value="6.40 A"/>
    <property type="chains" value="K=2-211"/>
</dbReference>
<dbReference type="PDB" id="5GAS">
    <property type="method" value="EM"/>
    <property type="resolution" value="9.50 A"/>
    <property type="chains" value="K=2-211"/>
</dbReference>
<dbReference type="PDB" id="5TSJ">
    <property type="method" value="EM"/>
    <property type="resolution" value="8.70 A"/>
    <property type="chains" value="K=2-211"/>
</dbReference>
<dbReference type="PDB" id="5Y5X">
    <property type="method" value="EM"/>
    <property type="resolution" value="5.00 A"/>
    <property type="chains" value="G=1-223"/>
</dbReference>
<dbReference type="PDB" id="5Y5Y">
    <property type="method" value="EM"/>
    <property type="resolution" value="4.70 A"/>
    <property type="chains" value="G=1-223"/>
</dbReference>
<dbReference type="PDB" id="5Y5Z">
    <property type="method" value="EM"/>
    <property type="resolution" value="6.70 A"/>
    <property type="chains" value="G=1-223"/>
</dbReference>
<dbReference type="PDB" id="5Y60">
    <property type="method" value="EM"/>
    <property type="resolution" value="7.50 A"/>
    <property type="chains" value="G=1-223"/>
</dbReference>
<dbReference type="PDB" id="6LY8">
    <property type="method" value="EM"/>
    <property type="resolution" value="3.50 A"/>
    <property type="chains" value="G=1-223"/>
</dbReference>
<dbReference type="PDB" id="6QUM">
    <property type="method" value="EM"/>
    <property type="resolution" value="3.25 A"/>
    <property type="chains" value="G=1-223"/>
</dbReference>
<dbReference type="PDB" id="6R0W">
    <property type="method" value="EM"/>
    <property type="resolution" value="3.60 A"/>
    <property type="chains" value="G=1-223"/>
</dbReference>
<dbReference type="PDB" id="6R0Y">
    <property type="method" value="EM"/>
    <property type="resolution" value="3.90 A"/>
    <property type="chains" value="G=1-223"/>
</dbReference>
<dbReference type="PDB" id="6R0Z">
    <property type="method" value="EM"/>
    <property type="resolution" value="3.80 A"/>
    <property type="chains" value="G=1-223"/>
</dbReference>
<dbReference type="PDB" id="6R10">
    <property type="method" value="EM"/>
    <property type="resolution" value="4.30 A"/>
    <property type="chains" value="G=1-223"/>
</dbReference>
<dbReference type="PDB" id="7VAI">
    <property type="method" value="EM"/>
    <property type="resolution" value="3.10 A"/>
    <property type="chains" value="G=1-223"/>
</dbReference>
<dbReference type="PDB" id="7VAJ">
    <property type="method" value="EM"/>
    <property type="resolution" value="3.10 A"/>
    <property type="chains" value="G=1-223"/>
</dbReference>
<dbReference type="PDB" id="7VAK">
    <property type="method" value="EM"/>
    <property type="resolution" value="4.70 A"/>
    <property type="chains" value="G=1-223"/>
</dbReference>
<dbReference type="PDB" id="7VAL">
    <property type="method" value="EM"/>
    <property type="resolution" value="3.10 A"/>
    <property type="chains" value="G=1-223"/>
</dbReference>
<dbReference type="PDB" id="7VAM">
    <property type="method" value="EM"/>
    <property type="resolution" value="3.20 A"/>
    <property type="chains" value="G=1-223"/>
</dbReference>
<dbReference type="PDB" id="7VAN">
    <property type="method" value="EM"/>
    <property type="resolution" value="3.00 A"/>
    <property type="chains" value="G=1-223"/>
</dbReference>
<dbReference type="PDB" id="7VAO">
    <property type="method" value="EM"/>
    <property type="resolution" value="3.40 A"/>
    <property type="chains" value="G=1-223"/>
</dbReference>
<dbReference type="PDB" id="7VAP">
    <property type="method" value="EM"/>
    <property type="resolution" value="3.00 A"/>
    <property type="chains" value="G=1-223"/>
</dbReference>
<dbReference type="PDB" id="7VAQ">
    <property type="method" value="EM"/>
    <property type="resolution" value="3.60 A"/>
    <property type="chains" value="G=1-223"/>
</dbReference>
<dbReference type="PDB" id="7VAR">
    <property type="method" value="EM"/>
    <property type="resolution" value="2.90 A"/>
    <property type="chains" value="G=1-223"/>
</dbReference>
<dbReference type="PDB" id="7VAS">
    <property type="method" value="EM"/>
    <property type="resolution" value="3.00 A"/>
    <property type="chains" value="G=1-223"/>
</dbReference>
<dbReference type="PDB" id="7VAT">
    <property type="method" value="EM"/>
    <property type="resolution" value="3.20 A"/>
    <property type="chains" value="G=1-223"/>
</dbReference>
<dbReference type="PDB" id="7VAU">
    <property type="method" value="EM"/>
    <property type="resolution" value="3.30 A"/>
    <property type="chains" value="G=1-223"/>
</dbReference>
<dbReference type="PDB" id="7VAV">
    <property type="method" value="EM"/>
    <property type="resolution" value="2.80 A"/>
    <property type="chains" value="G=1-223"/>
</dbReference>
<dbReference type="PDB" id="7VAW">
    <property type="method" value="EM"/>
    <property type="resolution" value="2.70 A"/>
    <property type="chains" value="G=1-223"/>
</dbReference>
<dbReference type="PDB" id="7VAX">
    <property type="method" value="EM"/>
    <property type="resolution" value="2.90 A"/>
    <property type="chains" value="G=1-223"/>
</dbReference>
<dbReference type="PDB" id="7VAY">
    <property type="method" value="EM"/>
    <property type="resolution" value="3.30 A"/>
    <property type="chains" value="G=1-223"/>
</dbReference>
<dbReference type="PDB" id="7VB0">
    <property type="method" value="EM"/>
    <property type="resolution" value="3.60 A"/>
    <property type="chains" value="G=1-223"/>
</dbReference>
<dbReference type="PDB" id="8GXU">
    <property type="method" value="EM"/>
    <property type="resolution" value="2.50 A"/>
    <property type="chains" value="G=1-223"/>
</dbReference>
<dbReference type="PDB" id="8GXW">
    <property type="method" value="EM"/>
    <property type="resolution" value="2.70 A"/>
    <property type="chains" value="G=1-223"/>
</dbReference>
<dbReference type="PDB" id="8GXX">
    <property type="method" value="EM"/>
    <property type="resolution" value="3.00 A"/>
    <property type="chains" value="G=1-223"/>
</dbReference>
<dbReference type="PDB" id="8GXY">
    <property type="method" value="EM"/>
    <property type="resolution" value="2.80 A"/>
    <property type="chains" value="G=1-223"/>
</dbReference>
<dbReference type="PDB" id="8GXZ">
    <property type="method" value="EM"/>
    <property type="resolution" value="3.10 A"/>
    <property type="chains" value="G=1-223"/>
</dbReference>
<dbReference type="PDBsum" id="3A5C"/>
<dbReference type="PDBsum" id="3A5D"/>
<dbReference type="PDBsum" id="3J0J"/>
<dbReference type="PDBsum" id="3W3A"/>
<dbReference type="PDBsum" id="5GAR"/>
<dbReference type="PDBsum" id="5GAS"/>
<dbReference type="PDBsum" id="5TSJ"/>
<dbReference type="PDBsum" id="5Y5X"/>
<dbReference type="PDBsum" id="5Y5Y"/>
<dbReference type="PDBsum" id="5Y5Z"/>
<dbReference type="PDBsum" id="5Y60"/>
<dbReference type="PDBsum" id="6LY8"/>
<dbReference type="PDBsum" id="6QUM"/>
<dbReference type="PDBsum" id="6R0W"/>
<dbReference type="PDBsum" id="6R0Y"/>
<dbReference type="PDBsum" id="6R0Z"/>
<dbReference type="PDBsum" id="6R10"/>
<dbReference type="PDBsum" id="7VAI"/>
<dbReference type="PDBsum" id="7VAJ"/>
<dbReference type="PDBsum" id="7VAK"/>
<dbReference type="PDBsum" id="7VAL"/>
<dbReference type="PDBsum" id="7VAM"/>
<dbReference type="PDBsum" id="7VAN"/>
<dbReference type="PDBsum" id="7VAO"/>
<dbReference type="PDBsum" id="7VAP"/>
<dbReference type="PDBsum" id="7VAQ"/>
<dbReference type="PDBsum" id="7VAR"/>
<dbReference type="PDBsum" id="7VAS"/>
<dbReference type="PDBsum" id="7VAT"/>
<dbReference type="PDBsum" id="7VAU"/>
<dbReference type="PDBsum" id="7VAV"/>
<dbReference type="PDBsum" id="7VAW"/>
<dbReference type="PDBsum" id="7VAX"/>
<dbReference type="PDBsum" id="7VAY"/>
<dbReference type="PDBsum" id="7VB0"/>
<dbReference type="PDBsum" id="8GXU"/>
<dbReference type="PDBsum" id="8GXW"/>
<dbReference type="PDBsum" id="8GXX"/>
<dbReference type="PDBsum" id="8GXY"/>
<dbReference type="PDBsum" id="8GXZ"/>
<dbReference type="EMDB" id="EMD-30014"/>
<dbReference type="EMDB" id="EMD-31841"/>
<dbReference type="EMDB" id="EMD-31842"/>
<dbReference type="EMDB" id="EMD-31843"/>
<dbReference type="EMDB" id="EMD-31844"/>
<dbReference type="EMDB" id="EMD-31845"/>
<dbReference type="EMDB" id="EMD-31846"/>
<dbReference type="EMDB" id="EMD-31847"/>
<dbReference type="EMDB" id="EMD-31848"/>
<dbReference type="EMDB" id="EMD-31849"/>
<dbReference type="EMDB" id="EMD-31850"/>
<dbReference type="EMDB" id="EMD-31851"/>
<dbReference type="EMDB" id="EMD-31852"/>
<dbReference type="EMDB" id="EMD-31853"/>
<dbReference type="EMDB" id="EMD-31854"/>
<dbReference type="EMDB" id="EMD-31855"/>
<dbReference type="EMDB" id="EMD-31856"/>
<dbReference type="EMDB" id="EMD-31857"/>
<dbReference type="EMDB" id="EMD-31858"/>
<dbReference type="EMDB" id="EMD-31859"/>
<dbReference type="EMDB" id="EMD-31860"/>
<dbReference type="EMDB" id="EMD-31861"/>
<dbReference type="EMDB" id="EMD-31862"/>
<dbReference type="EMDB" id="EMD-31863"/>
<dbReference type="EMDB" id="EMD-31864"/>
<dbReference type="EMDB" id="EMD-31865"/>
<dbReference type="EMDB" id="EMD-31866"/>
<dbReference type="EMDB" id="EMD-31867"/>
<dbReference type="EMDB" id="EMD-31868"/>
<dbReference type="EMDB" id="EMD-31869"/>
<dbReference type="EMDB" id="EMD-31870"/>
<dbReference type="EMDB" id="EMD-31871"/>
<dbReference type="EMDB" id="EMD-31872"/>
<dbReference type="EMDB" id="EMD-31873"/>
<dbReference type="EMDB" id="EMD-34362"/>
<dbReference type="EMDB" id="EMD-34363"/>
<dbReference type="EMDB" id="EMD-34364"/>
<dbReference type="EMDB" id="EMD-34365"/>
<dbReference type="EMDB" id="EMD-34366"/>
<dbReference type="EMDB" id="EMD-4640"/>
<dbReference type="EMDB" id="EMD-4699"/>
<dbReference type="EMDB" id="EMD-4700"/>
<dbReference type="EMDB" id="EMD-4702"/>
<dbReference type="EMDB" id="EMD-4703"/>
<dbReference type="EMDB" id="EMD-6810"/>
<dbReference type="EMDB" id="EMD-6811"/>
<dbReference type="EMDB" id="EMD-6812"/>
<dbReference type="EMDB" id="EMD-6813"/>
<dbReference type="SMR" id="O87880"/>
<dbReference type="IntAct" id="O87880">
    <property type="interactions" value="2"/>
</dbReference>
<dbReference type="MINT" id="O87880"/>
<dbReference type="TCDB" id="3.A.2.2.1">
    <property type="family name" value="the h+- or na+-translocating f-type, v-type and a-type atpase (f-atpase) superfamily"/>
</dbReference>
<dbReference type="EnsemblBacteria" id="BAD71094">
    <property type="protein sequence ID" value="BAD71094"/>
    <property type="gene ID" value="BAD71094"/>
</dbReference>
<dbReference type="GeneID" id="3168073"/>
<dbReference type="KEGG" id="ttj:TTHA1271"/>
<dbReference type="PATRIC" id="fig|300852.9.peg.1250"/>
<dbReference type="eggNOG" id="COG1394">
    <property type="taxonomic scope" value="Bacteria"/>
</dbReference>
<dbReference type="HOGENOM" id="CLU_069688_2_1_0"/>
<dbReference type="PhylomeDB" id="O87880"/>
<dbReference type="EvolutionaryTrace" id="O87880"/>
<dbReference type="Proteomes" id="UP000000532">
    <property type="component" value="Chromosome"/>
</dbReference>
<dbReference type="GO" id="GO:0005524">
    <property type="term" value="F:ATP binding"/>
    <property type="evidence" value="ECO:0007669"/>
    <property type="project" value="UniProtKB-UniRule"/>
</dbReference>
<dbReference type="GO" id="GO:0046933">
    <property type="term" value="F:proton-transporting ATP synthase activity, rotational mechanism"/>
    <property type="evidence" value="ECO:0007669"/>
    <property type="project" value="UniProtKB-UniRule"/>
</dbReference>
<dbReference type="GO" id="GO:0046961">
    <property type="term" value="F:proton-transporting ATPase activity, rotational mechanism"/>
    <property type="evidence" value="ECO:0007669"/>
    <property type="project" value="InterPro"/>
</dbReference>
<dbReference type="GO" id="GO:0042777">
    <property type="term" value="P:proton motive force-driven plasma membrane ATP synthesis"/>
    <property type="evidence" value="ECO:0007669"/>
    <property type="project" value="UniProtKB-UniRule"/>
</dbReference>
<dbReference type="Gene3D" id="1.10.287.3240">
    <property type="match status" value="1"/>
</dbReference>
<dbReference type="HAMAP" id="MF_00271">
    <property type="entry name" value="ATP_synth_D_arch"/>
    <property type="match status" value="1"/>
</dbReference>
<dbReference type="InterPro" id="IPR002699">
    <property type="entry name" value="V_ATPase_D"/>
</dbReference>
<dbReference type="NCBIfam" id="TIGR00309">
    <property type="entry name" value="V_ATPase_subD"/>
    <property type="match status" value="1"/>
</dbReference>
<dbReference type="PANTHER" id="PTHR11671">
    <property type="entry name" value="V-TYPE ATP SYNTHASE SUBUNIT D"/>
    <property type="match status" value="1"/>
</dbReference>
<dbReference type="Pfam" id="PF01813">
    <property type="entry name" value="ATP-synt_D"/>
    <property type="match status" value="1"/>
</dbReference>